<proteinExistence type="inferred from homology"/>
<protein>
    <recommendedName>
        <fullName evidence="1">UDP-N-acetylglucosamine 1-carboxyvinyltransferase</fullName>
        <ecNumber evidence="1">2.5.1.7</ecNumber>
    </recommendedName>
    <alternativeName>
        <fullName evidence="1">Enoylpyruvate transferase</fullName>
    </alternativeName>
    <alternativeName>
        <fullName evidence="1">UDP-N-acetylglucosamine enolpyruvyl transferase</fullName>
        <shortName evidence="1">EPT</shortName>
    </alternativeName>
</protein>
<comment type="function">
    <text evidence="1">Cell wall formation. Adds enolpyruvyl to UDP-N-acetylglucosamine.</text>
</comment>
<comment type="catalytic activity">
    <reaction evidence="1">
        <text>phosphoenolpyruvate + UDP-N-acetyl-alpha-D-glucosamine = UDP-N-acetyl-3-O-(1-carboxyvinyl)-alpha-D-glucosamine + phosphate</text>
        <dbReference type="Rhea" id="RHEA:18681"/>
        <dbReference type="ChEBI" id="CHEBI:43474"/>
        <dbReference type="ChEBI" id="CHEBI:57705"/>
        <dbReference type="ChEBI" id="CHEBI:58702"/>
        <dbReference type="ChEBI" id="CHEBI:68483"/>
        <dbReference type="EC" id="2.5.1.7"/>
    </reaction>
</comment>
<comment type="pathway">
    <text evidence="1">Cell wall biogenesis; peptidoglycan biosynthesis.</text>
</comment>
<comment type="subcellular location">
    <subcellularLocation>
        <location evidence="1">Cytoplasm</location>
    </subcellularLocation>
</comment>
<comment type="similarity">
    <text evidence="1">Belongs to the EPSP synthase family. MurA subfamily.</text>
</comment>
<dbReference type="EC" id="2.5.1.7" evidence="1"/>
<dbReference type="EMBL" id="CP000308">
    <property type="protein sequence ID" value="ABG15696.1"/>
    <property type="molecule type" value="Genomic_DNA"/>
</dbReference>
<dbReference type="RefSeq" id="WP_002210127.1">
    <property type="nucleotide sequence ID" value="NZ_CP009906.1"/>
</dbReference>
<dbReference type="SMR" id="Q1C1H6"/>
<dbReference type="GeneID" id="57975146"/>
<dbReference type="KEGG" id="ypa:YPA_3734"/>
<dbReference type="UniPathway" id="UPA00219"/>
<dbReference type="Proteomes" id="UP000001971">
    <property type="component" value="Chromosome"/>
</dbReference>
<dbReference type="GO" id="GO:0005737">
    <property type="term" value="C:cytoplasm"/>
    <property type="evidence" value="ECO:0007669"/>
    <property type="project" value="UniProtKB-SubCell"/>
</dbReference>
<dbReference type="GO" id="GO:0008760">
    <property type="term" value="F:UDP-N-acetylglucosamine 1-carboxyvinyltransferase activity"/>
    <property type="evidence" value="ECO:0007669"/>
    <property type="project" value="UniProtKB-UniRule"/>
</dbReference>
<dbReference type="GO" id="GO:0051301">
    <property type="term" value="P:cell division"/>
    <property type="evidence" value="ECO:0007669"/>
    <property type="project" value="UniProtKB-KW"/>
</dbReference>
<dbReference type="GO" id="GO:0071555">
    <property type="term" value="P:cell wall organization"/>
    <property type="evidence" value="ECO:0007669"/>
    <property type="project" value="UniProtKB-KW"/>
</dbReference>
<dbReference type="GO" id="GO:0009252">
    <property type="term" value="P:peptidoglycan biosynthetic process"/>
    <property type="evidence" value="ECO:0007669"/>
    <property type="project" value="UniProtKB-UniRule"/>
</dbReference>
<dbReference type="GO" id="GO:0008360">
    <property type="term" value="P:regulation of cell shape"/>
    <property type="evidence" value="ECO:0007669"/>
    <property type="project" value="UniProtKB-KW"/>
</dbReference>
<dbReference type="GO" id="GO:0019277">
    <property type="term" value="P:UDP-N-acetylgalactosamine biosynthetic process"/>
    <property type="evidence" value="ECO:0007669"/>
    <property type="project" value="InterPro"/>
</dbReference>
<dbReference type="CDD" id="cd01555">
    <property type="entry name" value="UdpNAET"/>
    <property type="match status" value="1"/>
</dbReference>
<dbReference type="FunFam" id="3.65.10.10:FF:000002">
    <property type="entry name" value="UDP-N-acetylglucosamine 1-carboxyvinyltransferase"/>
    <property type="match status" value="1"/>
</dbReference>
<dbReference type="Gene3D" id="3.65.10.10">
    <property type="entry name" value="Enolpyruvate transferase domain"/>
    <property type="match status" value="2"/>
</dbReference>
<dbReference type="HAMAP" id="MF_00111">
    <property type="entry name" value="MurA"/>
    <property type="match status" value="1"/>
</dbReference>
<dbReference type="InterPro" id="IPR001986">
    <property type="entry name" value="Enolpyruvate_Tfrase_dom"/>
</dbReference>
<dbReference type="InterPro" id="IPR036968">
    <property type="entry name" value="Enolpyruvate_Tfrase_sf"/>
</dbReference>
<dbReference type="InterPro" id="IPR050068">
    <property type="entry name" value="MurA_subfamily"/>
</dbReference>
<dbReference type="InterPro" id="IPR013792">
    <property type="entry name" value="RNA3'P_cycl/enolpyr_Trfase_a/b"/>
</dbReference>
<dbReference type="InterPro" id="IPR005750">
    <property type="entry name" value="UDP_GlcNAc_COvinyl_MurA"/>
</dbReference>
<dbReference type="NCBIfam" id="TIGR01072">
    <property type="entry name" value="murA"/>
    <property type="match status" value="1"/>
</dbReference>
<dbReference type="NCBIfam" id="NF006873">
    <property type="entry name" value="PRK09369.1"/>
    <property type="match status" value="1"/>
</dbReference>
<dbReference type="PANTHER" id="PTHR43783">
    <property type="entry name" value="UDP-N-ACETYLGLUCOSAMINE 1-CARBOXYVINYLTRANSFERASE"/>
    <property type="match status" value="1"/>
</dbReference>
<dbReference type="PANTHER" id="PTHR43783:SF1">
    <property type="entry name" value="UDP-N-ACETYLGLUCOSAMINE 1-CARBOXYVINYLTRANSFERASE"/>
    <property type="match status" value="1"/>
</dbReference>
<dbReference type="Pfam" id="PF00275">
    <property type="entry name" value="EPSP_synthase"/>
    <property type="match status" value="1"/>
</dbReference>
<dbReference type="SUPFAM" id="SSF55205">
    <property type="entry name" value="EPT/RTPC-like"/>
    <property type="match status" value="1"/>
</dbReference>
<organism>
    <name type="scientific">Yersinia pestis bv. Antiqua (strain Antiqua)</name>
    <dbReference type="NCBI Taxonomy" id="360102"/>
    <lineage>
        <taxon>Bacteria</taxon>
        <taxon>Pseudomonadati</taxon>
        <taxon>Pseudomonadota</taxon>
        <taxon>Gammaproteobacteria</taxon>
        <taxon>Enterobacterales</taxon>
        <taxon>Yersiniaceae</taxon>
        <taxon>Yersinia</taxon>
    </lineage>
</organism>
<accession>Q1C1H6</accession>
<evidence type="ECO:0000255" key="1">
    <source>
        <dbReference type="HAMAP-Rule" id="MF_00111"/>
    </source>
</evidence>
<name>MURA_YERPA</name>
<feature type="chain" id="PRO_1000023124" description="UDP-N-acetylglucosamine 1-carboxyvinyltransferase">
    <location>
        <begin position="1"/>
        <end position="420"/>
    </location>
</feature>
<feature type="active site" description="Proton donor" evidence="1">
    <location>
        <position position="116"/>
    </location>
</feature>
<feature type="binding site" evidence="1">
    <location>
        <begin position="22"/>
        <end position="23"/>
    </location>
    <ligand>
        <name>phosphoenolpyruvate</name>
        <dbReference type="ChEBI" id="CHEBI:58702"/>
    </ligand>
</feature>
<feature type="binding site" evidence="1">
    <location>
        <position position="92"/>
    </location>
    <ligand>
        <name>UDP-N-acetyl-alpha-D-glucosamine</name>
        <dbReference type="ChEBI" id="CHEBI:57705"/>
    </ligand>
</feature>
<feature type="binding site" evidence="1">
    <location>
        <begin position="121"/>
        <end position="125"/>
    </location>
    <ligand>
        <name>UDP-N-acetyl-alpha-D-glucosamine</name>
        <dbReference type="ChEBI" id="CHEBI:57705"/>
    </ligand>
</feature>
<feature type="binding site" evidence="1">
    <location>
        <begin position="161"/>
        <end position="164"/>
    </location>
    <ligand>
        <name>UDP-N-acetyl-alpha-D-glucosamine</name>
        <dbReference type="ChEBI" id="CHEBI:57705"/>
    </ligand>
</feature>
<feature type="binding site" evidence="1">
    <location>
        <position position="306"/>
    </location>
    <ligand>
        <name>UDP-N-acetyl-alpha-D-glucosamine</name>
        <dbReference type="ChEBI" id="CHEBI:57705"/>
    </ligand>
</feature>
<feature type="binding site" evidence="1">
    <location>
        <position position="328"/>
    </location>
    <ligand>
        <name>UDP-N-acetyl-alpha-D-glucosamine</name>
        <dbReference type="ChEBI" id="CHEBI:57705"/>
    </ligand>
</feature>
<feature type="modified residue" description="2-(S-cysteinyl)pyruvic acid O-phosphothioketal" evidence="1">
    <location>
        <position position="116"/>
    </location>
</feature>
<sequence length="420" mass="44845">MDKFRVQGRTRLSGEVTISGAKNAALPILFAALLAEEPVELQNVPKLKDIDTTIKLLSQLGTKIERNNGSVFVDASAVNEFCAPYDLVKTMRASIWALGPLVARFGQGQVSLPGGCAIGARPVDLHITGLEQLGAEIKLEEGYVKASVNGRLKGAHIVMDKVSVGATVTIMSAATLAEGTTVIENAAREPEIVDTANFLNTLGAKISGAGTDRITIEGVTRLGGGVYRVLPDRIETGTFLVAAAISGGKVVCRQTRPDTLDAVLAKLREAGADIEVGDDWISLDMQGKRPKAITFRTAPHPGFPTDMQAQFSLLNLVAEGTGVITETIFENRFMHVPELIRMGAHAEIESNTVICYGVEQLSGAQVMATDLRASASLVLAGCIAEGVTIVDRIYHIDRGYERIEDKLRALGAKIERVKGE</sequence>
<keyword id="KW-0131">Cell cycle</keyword>
<keyword id="KW-0132">Cell division</keyword>
<keyword id="KW-0133">Cell shape</keyword>
<keyword id="KW-0961">Cell wall biogenesis/degradation</keyword>
<keyword id="KW-0963">Cytoplasm</keyword>
<keyword id="KW-0573">Peptidoglycan synthesis</keyword>
<keyword id="KW-0670">Pyruvate</keyword>
<keyword id="KW-0808">Transferase</keyword>
<gene>
    <name evidence="1" type="primary">murA</name>
    <name type="ordered locus">YPA_3734</name>
</gene>
<reference key="1">
    <citation type="journal article" date="2006" name="J. Bacteriol.">
        <title>Complete genome sequence of Yersinia pestis strains Antiqua and Nepal516: evidence of gene reduction in an emerging pathogen.</title>
        <authorList>
            <person name="Chain P.S.G."/>
            <person name="Hu P."/>
            <person name="Malfatti S.A."/>
            <person name="Radnedge L."/>
            <person name="Larimer F."/>
            <person name="Vergez L.M."/>
            <person name="Worsham P."/>
            <person name="Chu M.C."/>
            <person name="Andersen G.L."/>
        </authorList>
    </citation>
    <scope>NUCLEOTIDE SEQUENCE [LARGE SCALE GENOMIC DNA]</scope>
    <source>
        <strain>Antiqua</strain>
    </source>
</reference>